<gene>
    <name evidence="1" type="primary">glyA</name>
    <name type="ordered locus">LIC_12335</name>
</gene>
<accession>Q72PY2</accession>
<organism>
    <name type="scientific">Leptospira interrogans serogroup Icterohaemorrhagiae serovar copenhageni (strain Fiocruz L1-130)</name>
    <dbReference type="NCBI Taxonomy" id="267671"/>
    <lineage>
        <taxon>Bacteria</taxon>
        <taxon>Pseudomonadati</taxon>
        <taxon>Spirochaetota</taxon>
        <taxon>Spirochaetia</taxon>
        <taxon>Leptospirales</taxon>
        <taxon>Leptospiraceae</taxon>
        <taxon>Leptospira</taxon>
    </lineage>
</organism>
<name>GLYA_LEPIC</name>
<sequence length="415" mass="44974">MQFLPKADPEIFAALKKEDERQENNLEMIASENFVSRAVLEAYTSTLTNKYAEGYPGKRYYNGCHNADVVETLAIERAKKLFGSQYANVQPHSGAQANMAVFLACLEPGDSFLGMNLAHGGHLTHGSPVNVSGKIYKPIPYGVDSKTETINYDEVAKLAREHKPKLIVAGASAYARTIDFSKFAEIAKEVGAKLMADIAHISGLVATGYHPSPIGMFDFVTTTTHKTLRGPRGGLILSTLENEKVLNSRVFPGIQGGPLMHVIAAKAVAFQEALQPDYKKYIETVLANAKTLAEVFVKRGYRVVSGGTDNHLVLLDVSVKGLTGAQAADGLDEVGVTVNKNAIPFDKNPPAVASGIRLGTPALTTRGLKPADMETVGNLICDFLDHPNDDKNRTKVKGGIQEMTQKFPMNQFRLD</sequence>
<reference key="1">
    <citation type="journal article" date="2004" name="J. Bacteriol.">
        <title>Comparative genomics of two Leptospira interrogans serovars reveals novel insights into physiology and pathogenesis.</title>
        <authorList>
            <person name="Nascimento A.L.T.O."/>
            <person name="Ko A.I."/>
            <person name="Martins E.A.L."/>
            <person name="Monteiro-Vitorello C.B."/>
            <person name="Ho P.L."/>
            <person name="Haake D.A."/>
            <person name="Verjovski-Almeida S."/>
            <person name="Hartskeerl R.A."/>
            <person name="Marques M.V."/>
            <person name="Oliveira M.C."/>
            <person name="Menck C.F.M."/>
            <person name="Leite L.C.C."/>
            <person name="Carrer H."/>
            <person name="Coutinho L.L."/>
            <person name="Degrave W.M."/>
            <person name="Dellagostin O.A."/>
            <person name="El-Dorry H."/>
            <person name="Ferro E.S."/>
            <person name="Ferro M.I.T."/>
            <person name="Furlan L.R."/>
            <person name="Gamberini M."/>
            <person name="Giglioti E.A."/>
            <person name="Goes-Neto A."/>
            <person name="Goldman G.H."/>
            <person name="Goldman M.H.S."/>
            <person name="Harakava R."/>
            <person name="Jeronimo S.M.B."/>
            <person name="Junqueira-de-Azevedo I.L.M."/>
            <person name="Kimura E.T."/>
            <person name="Kuramae E.E."/>
            <person name="Lemos E.G.M."/>
            <person name="Lemos M.V.F."/>
            <person name="Marino C.L."/>
            <person name="Nunes L.R."/>
            <person name="de Oliveira R.C."/>
            <person name="Pereira G.G."/>
            <person name="Reis M.S."/>
            <person name="Schriefer A."/>
            <person name="Siqueira W.J."/>
            <person name="Sommer P."/>
            <person name="Tsai S.M."/>
            <person name="Simpson A.J.G."/>
            <person name="Ferro J.A."/>
            <person name="Camargo L.E.A."/>
            <person name="Kitajima J.P."/>
            <person name="Setubal J.C."/>
            <person name="Van Sluys M.A."/>
        </authorList>
    </citation>
    <scope>NUCLEOTIDE SEQUENCE [LARGE SCALE GENOMIC DNA]</scope>
    <source>
        <strain>Fiocruz L1-130</strain>
    </source>
</reference>
<dbReference type="EC" id="2.1.2.1" evidence="1"/>
<dbReference type="EMBL" id="AE016823">
    <property type="protein sequence ID" value="AAS70904.1"/>
    <property type="molecule type" value="Genomic_DNA"/>
</dbReference>
<dbReference type="RefSeq" id="WP_001160150.1">
    <property type="nucleotide sequence ID" value="NC_005823.1"/>
</dbReference>
<dbReference type="SMR" id="Q72PY2"/>
<dbReference type="GeneID" id="61142218"/>
<dbReference type="KEGG" id="lic:LIC_12335"/>
<dbReference type="HOGENOM" id="CLU_022477_2_1_12"/>
<dbReference type="UniPathway" id="UPA00193"/>
<dbReference type="UniPathway" id="UPA00288">
    <property type="reaction ID" value="UER01023"/>
</dbReference>
<dbReference type="Proteomes" id="UP000007037">
    <property type="component" value="Chromosome I"/>
</dbReference>
<dbReference type="GO" id="GO:0005829">
    <property type="term" value="C:cytosol"/>
    <property type="evidence" value="ECO:0007669"/>
    <property type="project" value="TreeGrafter"/>
</dbReference>
<dbReference type="GO" id="GO:0004372">
    <property type="term" value="F:glycine hydroxymethyltransferase activity"/>
    <property type="evidence" value="ECO:0007669"/>
    <property type="project" value="UniProtKB-UniRule"/>
</dbReference>
<dbReference type="GO" id="GO:0030170">
    <property type="term" value="F:pyridoxal phosphate binding"/>
    <property type="evidence" value="ECO:0007669"/>
    <property type="project" value="UniProtKB-UniRule"/>
</dbReference>
<dbReference type="GO" id="GO:0019264">
    <property type="term" value="P:glycine biosynthetic process from serine"/>
    <property type="evidence" value="ECO:0007669"/>
    <property type="project" value="UniProtKB-UniRule"/>
</dbReference>
<dbReference type="GO" id="GO:0035999">
    <property type="term" value="P:tetrahydrofolate interconversion"/>
    <property type="evidence" value="ECO:0007669"/>
    <property type="project" value="UniProtKB-UniRule"/>
</dbReference>
<dbReference type="CDD" id="cd00378">
    <property type="entry name" value="SHMT"/>
    <property type="match status" value="1"/>
</dbReference>
<dbReference type="FunFam" id="3.40.640.10:FF:000001">
    <property type="entry name" value="Serine hydroxymethyltransferase"/>
    <property type="match status" value="1"/>
</dbReference>
<dbReference type="Gene3D" id="3.90.1150.10">
    <property type="entry name" value="Aspartate Aminotransferase, domain 1"/>
    <property type="match status" value="1"/>
</dbReference>
<dbReference type="Gene3D" id="3.40.640.10">
    <property type="entry name" value="Type I PLP-dependent aspartate aminotransferase-like (Major domain)"/>
    <property type="match status" value="1"/>
</dbReference>
<dbReference type="HAMAP" id="MF_00051">
    <property type="entry name" value="SHMT"/>
    <property type="match status" value="1"/>
</dbReference>
<dbReference type="InterPro" id="IPR015424">
    <property type="entry name" value="PyrdxlP-dep_Trfase"/>
</dbReference>
<dbReference type="InterPro" id="IPR015421">
    <property type="entry name" value="PyrdxlP-dep_Trfase_major"/>
</dbReference>
<dbReference type="InterPro" id="IPR015422">
    <property type="entry name" value="PyrdxlP-dep_Trfase_small"/>
</dbReference>
<dbReference type="InterPro" id="IPR001085">
    <property type="entry name" value="Ser_HO-MeTrfase"/>
</dbReference>
<dbReference type="InterPro" id="IPR049943">
    <property type="entry name" value="Ser_HO-MeTrfase-like"/>
</dbReference>
<dbReference type="InterPro" id="IPR019798">
    <property type="entry name" value="Ser_HO-MeTrfase_PLP_BS"/>
</dbReference>
<dbReference type="InterPro" id="IPR039429">
    <property type="entry name" value="SHMT-like_dom"/>
</dbReference>
<dbReference type="NCBIfam" id="NF000586">
    <property type="entry name" value="PRK00011.1"/>
    <property type="match status" value="1"/>
</dbReference>
<dbReference type="PANTHER" id="PTHR11680">
    <property type="entry name" value="SERINE HYDROXYMETHYLTRANSFERASE"/>
    <property type="match status" value="1"/>
</dbReference>
<dbReference type="PANTHER" id="PTHR11680:SF35">
    <property type="entry name" value="SERINE HYDROXYMETHYLTRANSFERASE 1"/>
    <property type="match status" value="1"/>
</dbReference>
<dbReference type="Pfam" id="PF00464">
    <property type="entry name" value="SHMT"/>
    <property type="match status" value="1"/>
</dbReference>
<dbReference type="PIRSF" id="PIRSF000412">
    <property type="entry name" value="SHMT"/>
    <property type="match status" value="1"/>
</dbReference>
<dbReference type="SUPFAM" id="SSF53383">
    <property type="entry name" value="PLP-dependent transferases"/>
    <property type="match status" value="1"/>
</dbReference>
<dbReference type="PROSITE" id="PS00096">
    <property type="entry name" value="SHMT"/>
    <property type="match status" value="1"/>
</dbReference>
<feature type="chain" id="PRO_0000113597" description="Serine hydroxymethyltransferase">
    <location>
        <begin position="1"/>
        <end position="415"/>
    </location>
</feature>
<feature type="binding site" evidence="1">
    <location>
        <position position="117"/>
    </location>
    <ligand>
        <name>(6S)-5,6,7,8-tetrahydrofolate</name>
        <dbReference type="ChEBI" id="CHEBI:57453"/>
    </ligand>
</feature>
<feature type="binding site" evidence="1">
    <location>
        <begin position="121"/>
        <end position="123"/>
    </location>
    <ligand>
        <name>(6S)-5,6,7,8-tetrahydrofolate</name>
        <dbReference type="ChEBI" id="CHEBI:57453"/>
    </ligand>
</feature>
<feature type="site" description="Plays an important role in substrate specificity" evidence="1">
    <location>
        <position position="225"/>
    </location>
</feature>
<feature type="modified residue" description="N6-(pyridoxal phosphate)lysine" evidence="1">
    <location>
        <position position="226"/>
    </location>
</feature>
<evidence type="ECO:0000255" key="1">
    <source>
        <dbReference type="HAMAP-Rule" id="MF_00051"/>
    </source>
</evidence>
<keyword id="KW-0028">Amino-acid biosynthesis</keyword>
<keyword id="KW-0963">Cytoplasm</keyword>
<keyword id="KW-0554">One-carbon metabolism</keyword>
<keyword id="KW-0663">Pyridoxal phosphate</keyword>
<keyword id="KW-0808">Transferase</keyword>
<proteinExistence type="inferred from homology"/>
<comment type="function">
    <text evidence="1">Catalyzes the reversible interconversion of serine and glycine with tetrahydrofolate (THF) serving as the one-carbon carrier. This reaction serves as the major source of one-carbon groups required for the biosynthesis of purines, thymidylate, methionine, and other important biomolecules. Also exhibits THF-independent aldolase activity toward beta-hydroxyamino acids, producing glycine and aldehydes, via a retro-aldol mechanism.</text>
</comment>
<comment type="catalytic activity">
    <reaction evidence="1">
        <text>(6R)-5,10-methylene-5,6,7,8-tetrahydrofolate + glycine + H2O = (6S)-5,6,7,8-tetrahydrofolate + L-serine</text>
        <dbReference type="Rhea" id="RHEA:15481"/>
        <dbReference type="ChEBI" id="CHEBI:15377"/>
        <dbReference type="ChEBI" id="CHEBI:15636"/>
        <dbReference type="ChEBI" id="CHEBI:33384"/>
        <dbReference type="ChEBI" id="CHEBI:57305"/>
        <dbReference type="ChEBI" id="CHEBI:57453"/>
        <dbReference type="EC" id="2.1.2.1"/>
    </reaction>
</comment>
<comment type="cofactor">
    <cofactor evidence="1">
        <name>pyridoxal 5'-phosphate</name>
        <dbReference type="ChEBI" id="CHEBI:597326"/>
    </cofactor>
</comment>
<comment type="pathway">
    <text evidence="1">One-carbon metabolism; tetrahydrofolate interconversion.</text>
</comment>
<comment type="pathway">
    <text evidence="1">Amino-acid biosynthesis; glycine biosynthesis; glycine from L-serine: step 1/1.</text>
</comment>
<comment type="subunit">
    <text evidence="1">Homodimer.</text>
</comment>
<comment type="subcellular location">
    <subcellularLocation>
        <location evidence="1">Cytoplasm</location>
    </subcellularLocation>
</comment>
<comment type="similarity">
    <text evidence="1">Belongs to the SHMT family.</text>
</comment>
<protein>
    <recommendedName>
        <fullName evidence="1">Serine hydroxymethyltransferase</fullName>
        <shortName evidence="1">SHMT</shortName>
        <shortName evidence="1">Serine methylase</shortName>
        <ecNumber evidence="1">2.1.2.1</ecNumber>
    </recommendedName>
</protein>